<gene>
    <name evidence="1" type="primary">Pheta2</name>
    <name evidence="7" type="synonym">Fam109b</name>
</gene>
<keyword id="KW-0175">Coiled coil</keyword>
<keyword id="KW-0968">Cytoplasmic vesicle</keyword>
<keyword id="KW-0967">Endosome</keyword>
<keyword id="KW-0333">Golgi apparatus</keyword>
<keyword id="KW-1185">Reference proteome</keyword>
<feature type="chain" id="PRO_0000254134" description="Sesquipedalian-2">
    <location>
        <begin position="1"/>
        <end position="259"/>
    </location>
</feature>
<feature type="domain" description="PH" evidence="4">
    <location>
        <begin position="17"/>
        <end position="121"/>
    </location>
</feature>
<feature type="region of interest" description="Disordered" evidence="5">
    <location>
        <begin position="155"/>
        <end position="178"/>
    </location>
</feature>
<feature type="coiled-coil region" evidence="3">
    <location>
        <begin position="124"/>
        <end position="150"/>
    </location>
</feature>
<feature type="short sequence motif" description="F&amp;H">
    <location>
        <begin position="223"/>
        <end position="235"/>
    </location>
</feature>
<feature type="compositionally biased region" description="Basic and acidic residues" evidence="5">
    <location>
        <begin position="161"/>
        <end position="178"/>
    </location>
</feature>
<feature type="sequence conflict" description="In Ref. 1; BAC38865." evidence="6" ref="1">
    <original>S</original>
    <variation>N</variation>
    <location>
        <position position="155"/>
    </location>
</feature>
<proteinExistence type="evidence at protein level"/>
<comment type="function">
    <text evidence="1">Plays a role in endocytic trafficking. Required for receptor recycling from endosomes, both to the trans-Golgi network and the plasma membrane.</text>
</comment>
<comment type="subunit">
    <text evidence="1">Forms homodimers and heterodimers with PHETA1. Interacts with OCRL and INPP5B.</text>
</comment>
<comment type="subcellular location">
    <subcellularLocation>
        <location evidence="1">Early endosome</location>
    </subcellularLocation>
    <subcellularLocation>
        <location evidence="1">Recycling endosome</location>
    </subcellularLocation>
    <subcellularLocation>
        <location evidence="1">Golgi apparatus</location>
        <location evidence="1">trans-Golgi network</location>
    </subcellularLocation>
    <subcellularLocation>
        <location evidence="1">Cytoplasmic vesicle</location>
        <location evidence="1">Clathrin-coated vesicle</location>
    </subcellularLocation>
    <text evidence="1">Also found on macropinosomes. Not detected in late endosomes, nor in lysosomes.</text>
</comment>
<comment type="domain">
    <text evidence="2">The F&amp;H motif, an approximately 12-13 amino-acid sequence centered around Phe and His residues, is essential for binding to OCRL and INPP5B.</text>
</comment>
<comment type="miscellaneous">
    <text evidence="1">Was named after 'sesquipedalian', an unnecessarily long description of a simple thing.</text>
</comment>
<comment type="similarity">
    <text evidence="6">Belongs to the sesquipedalian family.</text>
</comment>
<protein>
    <recommendedName>
        <fullName>Sesquipedalian-2</fullName>
        <shortName>Ses2</shortName>
    </recommendedName>
    <alternativeName>
        <fullName>27 kDa inositol polyphosphate phosphatase interacting protein B</fullName>
        <shortName>IPIP27B</shortName>
    </alternativeName>
    <alternativeName>
        <fullName evidence="1">PH domain-containing endocytic trafficking adaptor 2</fullName>
    </alternativeName>
</protein>
<organism>
    <name type="scientific">Mus musculus</name>
    <name type="common">Mouse</name>
    <dbReference type="NCBI Taxonomy" id="10090"/>
    <lineage>
        <taxon>Eukaryota</taxon>
        <taxon>Metazoa</taxon>
        <taxon>Chordata</taxon>
        <taxon>Craniata</taxon>
        <taxon>Vertebrata</taxon>
        <taxon>Euteleostomi</taxon>
        <taxon>Mammalia</taxon>
        <taxon>Eutheria</taxon>
        <taxon>Euarchontoglires</taxon>
        <taxon>Glires</taxon>
        <taxon>Rodentia</taxon>
        <taxon>Myomorpha</taxon>
        <taxon>Muroidea</taxon>
        <taxon>Muridae</taxon>
        <taxon>Murinae</taxon>
        <taxon>Mus</taxon>
        <taxon>Mus</taxon>
    </lineage>
</organism>
<dbReference type="EMBL" id="AK083325">
    <property type="protein sequence ID" value="BAC38865.1"/>
    <property type="molecule type" value="mRNA"/>
</dbReference>
<dbReference type="EMBL" id="BC116256">
    <property type="protein sequence ID" value="AAI16257.1"/>
    <property type="molecule type" value="mRNA"/>
</dbReference>
<dbReference type="EMBL" id="BC116257">
    <property type="protein sequence ID" value="AAI16258.1"/>
    <property type="molecule type" value="mRNA"/>
</dbReference>
<dbReference type="CCDS" id="CCDS27687.1"/>
<dbReference type="RefSeq" id="NP_796365.1">
    <property type="nucleotide sequence ID" value="NM_177391.4"/>
</dbReference>
<dbReference type="RefSeq" id="XP_006521179.1">
    <property type="nucleotide sequence ID" value="XM_006521116.1"/>
</dbReference>
<dbReference type="RefSeq" id="XP_011243983.1">
    <property type="nucleotide sequence ID" value="XM_011245681.2"/>
</dbReference>
<dbReference type="RefSeq" id="XP_011243984.1">
    <property type="nucleotide sequence ID" value="XM_011245682.1"/>
</dbReference>
<dbReference type="SMR" id="Q14B98"/>
<dbReference type="FunCoup" id="Q14B98">
    <property type="interactions" value="331"/>
</dbReference>
<dbReference type="STRING" id="10090.ENSMUSP00000124703"/>
<dbReference type="GlyGen" id="Q14B98">
    <property type="glycosylation" value="1 site"/>
</dbReference>
<dbReference type="iPTMnet" id="Q14B98"/>
<dbReference type="PhosphoSitePlus" id="Q14B98"/>
<dbReference type="PaxDb" id="10090-ENSMUSP00000060598"/>
<dbReference type="ProteomicsDB" id="261323"/>
<dbReference type="DNASU" id="338368"/>
<dbReference type="GeneID" id="338368"/>
<dbReference type="KEGG" id="mmu:338368"/>
<dbReference type="UCSC" id="uc007wyy.1">
    <property type="organism name" value="mouse"/>
</dbReference>
<dbReference type="AGR" id="MGI:2443609"/>
<dbReference type="CTD" id="150368"/>
<dbReference type="MGI" id="MGI:2443609">
    <property type="gene designation" value="Pheta2"/>
</dbReference>
<dbReference type="eggNOG" id="ENOG502QQ94">
    <property type="taxonomic scope" value="Eukaryota"/>
</dbReference>
<dbReference type="InParanoid" id="Q14B98"/>
<dbReference type="OrthoDB" id="10261837at2759"/>
<dbReference type="TreeFam" id="TF326731"/>
<dbReference type="BioGRID-ORCS" id="338368">
    <property type="hits" value="3 hits in 76 CRISPR screens"/>
</dbReference>
<dbReference type="ChiTaRS" id="Pheta2">
    <property type="organism name" value="mouse"/>
</dbReference>
<dbReference type="PRO" id="PR:Q14B98"/>
<dbReference type="Proteomes" id="UP000000589">
    <property type="component" value="Unplaced"/>
</dbReference>
<dbReference type="RNAct" id="Q14B98">
    <property type="molecule type" value="protein"/>
</dbReference>
<dbReference type="GO" id="GO:0030136">
    <property type="term" value="C:clathrin-coated vesicle"/>
    <property type="evidence" value="ECO:0007669"/>
    <property type="project" value="UniProtKB-SubCell"/>
</dbReference>
<dbReference type="GO" id="GO:0005769">
    <property type="term" value="C:early endosome"/>
    <property type="evidence" value="ECO:0007669"/>
    <property type="project" value="UniProtKB-SubCell"/>
</dbReference>
<dbReference type="GO" id="GO:0005794">
    <property type="term" value="C:Golgi apparatus"/>
    <property type="evidence" value="ECO:0007669"/>
    <property type="project" value="UniProtKB-SubCell"/>
</dbReference>
<dbReference type="GO" id="GO:0055037">
    <property type="term" value="C:recycling endosome"/>
    <property type="evidence" value="ECO:0007669"/>
    <property type="project" value="UniProtKB-SubCell"/>
</dbReference>
<dbReference type="FunFam" id="2.30.29.30:FF:000292">
    <property type="entry name" value="sesquipedalian-2 isoform X2"/>
    <property type="match status" value="1"/>
</dbReference>
<dbReference type="Gene3D" id="2.30.29.30">
    <property type="entry name" value="Pleckstrin-homology domain (PH domain)/Phosphotyrosine-binding domain (PTB)"/>
    <property type="match status" value="1"/>
</dbReference>
<dbReference type="InterPro" id="IPR045188">
    <property type="entry name" value="Boi1/Boi2-like"/>
</dbReference>
<dbReference type="InterPro" id="IPR011993">
    <property type="entry name" value="PH-like_dom_sf"/>
</dbReference>
<dbReference type="InterPro" id="IPR001849">
    <property type="entry name" value="PH_domain"/>
</dbReference>
<dbReference type="PANTHER" id="PTHR22902">
    <property type="entry name" value="SESQUIPEDALIAN"/>
    <property type="match status" value="1"/>
</dbReference>
<dbReference type="PANTHER" id="PTHR22902:SF15">
    <property type="entry name" value="SESQUIPEDALIAN-2"/>
    <property type="match status" value="1"/>
</dbReference>
<dbReference type="Pfam" id="PF00169">
    <property type="entry name" value="PH"/>
    <property type="match status" value="1"/>
</dbReference>
<dbReference type="SMART" id="SM00233">
    <property type="entry name" value="PH"/>
    <property type="match status" value="1"/>
</dbReference>
<dbReference type="SUPFAM" id="SSF50729">
    <property type="entry name" value="PH domain-like"/>
    <property type="match status" value="1"/>
</dbReference>
<dbReference type="PROSITE" id="PS50003">
    <property type="entry name" value="PH_DOMAIN"/>
    <property type="match status" value="1"/>
</dbReference>
<name>SESQ2_MOUSE</name>
<accession>Q14B98</accession>
<accession>Q8BUL8</accession>
<evidence type="ECO:0000250" key="1">
    <source>
        <dbReference type="UniProtKB" id="Q6ICB4"/>
    </source>
</evidence>
<evidence type="ECO:0000250" key="2">
    <source>
        <dbReference type="UniProtKB" id="Q8N4B1"/>
    </source>
</evidence>
<evidence type="ECO:0000255" key="3"/>
<evidence type="ECO:0000255" key="4">
    <source>
        <dbReference type="PROSITE-ProRule" id="PRU00145"/>
    </source>
</evidence>
<evidence type="ECO:0000256" key="5">
    <source>
        <dbReference type="SAM" id="MobiDB-lite"/>
    </source>
</evidence>
<evidence type="ECO:0000305" key="6"/>
<evidence type="ECO:0000312" key="7">
    <source>
        <dbReference type="MGI" id="MGI:2443609"/>
    </source>
</evidence>
<reference key="1">
    <citation type="journal article" date="2005" name="Science">
        <title>The transcriptional landscape of the mammalian genome.</title>
        <authorList>
            <person name="Carninci P."/>
            <person name="Kasukawa T."/>
            <person name="Katayama S."/>
            <person name="Gough J."/>
            <person name="Frith M.C."/>
            <person name="Maeda N."/>
            <person name="Oyama R."/>
            <person name="Ravasi T."/>
            <person name="Lenhard B."/>
            <person name="Wells C."/>
            <person name="Kodzius R."/>
            <person name="Shimokawa K."/>
            <person name="Bajic V.B."/>
            <person name="Brenner S.E."/>
            <person name="Batalov S."/>
            <person name="Forrest A.R."/>
            <person name="Zavolan M."/>
            <person name="Davis M.J."/>
            <person name="Wilming L.G."/>
            <person name="Aidinis V."/>
            <person name="Allen J.E."/>
            <person name="Ambesi-Impiombato A."/>
            <person name="Apweiler R."/>
            <person name="Aturaliya R.N."/>
            <person name="Bailey T.L."/>
            <person name="Bansal M."/>
            <person name="Baxter L."/>
            <person name="Beisel K.W."/>
            <person name="Bersano T."/>
            <person name="Bono H."/>
            <person name="Chalk A.M."/>
            <person name="Chiu K.P."/>
            <person name="Choudhary V."/>
            <person name="Christoffels A."/>
            <person name="Clutterbuck D.R."/>
            <person name="Crowe M.L."/>
            <person name="Dalla E."/>
            <person name="Dalrymple B.P."/>
            <person name="de Bono B."/>
            <person name="Della Gatta G."/>
            <person name="di Bernardo D."/>
            <person name="Down T."/>
            <person name="Engstrom P."/>
            <person name="Fagiolini M."/>
            <person name="Faulkner G."/>
            <person name="Fletcher C.F."/>
            <person name="Fukushima T."/>
            <person name="Furuno M."/>
            <person name="Futaki S."/>
            <person name="Gariboldi M."/>
            <person name="Georgii-Hemming P."/>
            <person name="Gingeras T.R."/>
            <person name="Gojobori T."/>
            <person name="Green R.E."/>
            <person name="Gustincich S."/>
            <person name="Harbers M."/>
            <person name="Hayashi Y."/>
            <person name="Hensch T.K."/>
            <person name="Hirokawa N."/>
            <person name="Hill D."/>
            <person name="Huminiecki L."/>
            <person name="Iacono M."/>
            <person name="Ikeo K."/>
            <person name="Iwama A."/>
            <person name="Ishikawa T."/>
            <person name="Jakt M."/>
            <person name="Kanapin A."/>
            <person name="Katoh M."/>
            <person name="Kawasawa Y."/>
            <person name="Kelso J."/>
            <person name="Kitamura H."/>
            <person name="Kitano H."/>
            <person name="Kollias G."/>
            <person name="Krishnan S.P."/>
            <person name="Kruger A."/>
            <person name="Kummerfeld S.K."/>
            <person name="Kurochkin I.V."/>
            <person name="Lareau L.F."/>
            <person name="Lazarevic D."/>
            <person name="Lipovich L."/>
            <person name="Liu J."/>
            <person name="Liuni S."/>
            <person name="McWilliam S."/>
            <person name="Madan Babu M."/>
            <person name="Madera M."/>
            <person name="Marchionni L."/>
            <person name="Matsuda H."/>
            <person name="Matsuzawa S."/>
            <person name="Miki H."/>
            <person name="Mignone F."/>
            <person name="Miyake S."/>
            <person name="Morris K."/>
            <person name="Mottagui-Tabar S."/>
            <person name="Mulder N."/>
            <person name="Nakano N."/>
            <person name="Nakauchi H."/>
            <person name="Ng P."/>
            <person name="Nilsson R."/>
            <person name="Nishiguchi S."/>
            <person name="Nishikawa S."/>
            <person name="Nori F."/>
            <person name="Ohara O."/>
            <person name="Okazaki Y."/>
            <person name="Orlando V."/>
            <person name="Pang K.C."/>
            <person name="Pavan W.J."/>
            <person name="Pavesi G."/>
            <person name="Pesole G."/>
            <person name="Petrovsky N."/>
            <person name="Piazza S."/>
            <person name="Reed J."/>
            <person name="Reid J.F."/>
            <person name="Ring B.Z."/>
            <person name="Ringwald M."/>
            <person name="Rost B."/>
            <person name="Ruan Y."/>
            <person name="Salzberg S.L."/>
            <person name="Sandelin A."/>
            <person name="Schneider C."/>
            <person name="Schoenbach C."/>
            <person name="Sekiguchi K."/>
            <person name="Semple C.A."/>
            <person name="Seno S."/>
            <person name="Sessa L."/>
            <person name="Sheng Y."/>
            <person name="Shibata Y."/>
            <person name="Shimada H."/>
            <person name="Shimada K."/>
            <person name="Silva D."/>
            <person name="Sinclair B."/>
            <person name="Sperling S."/>
            <person name="Stupka E."/>
            <person name="Sugiura K."/>
            <person name="Sultana R."/>
            <person name="Takenaka Y."/>
            <person name="Taki K."/>
            <person name="Tammoja K."/>
            <person name="Tan S.L."/>
            <person name="Tang S."/>
            <person name="Taylor M.S."/>
            <person name="Tegner J."/>
            <person name="Teichmann S.A."/>
            <person name="Ueda H.R."/>
            <person name="van Nimwegen E."/>
            <person name="Verardo R."/>
            <person name="Wei C.L."/>
            <person name="Yagi K."/>
            <person name="Yamanishi H."/>
            <person name="Zabarovsky E."/>
            <person name="Zhu S."/>
            <person name="Zimmer A."/>
            <person name="Hide W."/>
            <person name="Bult C."/>
            <person name="Grimmond S.M."/>
            <person name="Teasdale R.D."/>
            <person name="Liu E.T."/>
            <person name="Brusic V."/>
            <person name="Quackenbush J."/>
            <person name="Wahlestedt C."/>
            <person name="Mattick J.S."/>
            <person name="Hume D.A."/>
            <person name="Kai C."/>
            <person name="Sasaki D."/>
            <person name="Tomaru Y."/>
            <person name="Fukuda S."/>
            <person name="Kanamori-Katayama M."/>
            <person name="Suzuki M."/>
            <person name="Aoki J."/>
            <person name="Arakawa T."/>
            <person name="Iida J."/>
            <person name="Imamura K."/>
            <person name="Itoh M."/>
            <person name="Kato T."/>
            <person name="Kawaji H."/>
            <person name="Kawagashira N."/>
            <person name="Kawashima T."/>
            <person name="Kojima M."/>
            <person name="Kondo S."/>
            <person name="Konno H."/>
            <person name="Nakano K."/>
            <person name="Ninomiya N."/>
            <person name="Nishio T."/>
            <person name="Okada M."/>
            <person name="Plessy C."/>
            <person name="Shibata K."/>
            <person name="Shiraki T."/>
            <person name="Suzuki S."/>
            <person name="Tagami M."/>
            <person name="Waki K."/>
            <person name="Watahiki A."/>
            <person name="Okamura-Oho Y."/>
            <person name="Suzuki H."/>
            <person name="Kawai J."/>
            <person name="Hayashizaki Y."/>
        </authorList>
    </citation>
    <scope>NUCLEOTIDE SEQUENCE [LARGE SCALE MRNA]</scope>
    <source>
        <strain>C57BL/6J</strain>
        <tissue>Thymus</tissue>
    </source>
</reference>
<reference key="2">
    <citation type="journal article" date="2004" name="Genome Res.">
        <title>The status, quality, and expansion of the NIH full-length cDNA project: the Mammalian Gene Collection (MGC).</title>
        <authorList>
            <consortium name="The MGC Project Team"/>
        </authorList>
    </citation>
    <scope>NUCLEOTIDE SEQUENCE [LARGE SCALE MRNA]</scope>
</reference>
<reference key="3">
    <citation type="journal article" date="2010" name="Cell">
        <title>A tissue-specific atlas of mouse protein phosphorylation and expression.</title>
        <authorList>
            <person name="Huttlin E.L."/>
            <person name="Jedrychowski M.P."/>
            <person name="Elias J.E."/>
            <person name="Goswami T."/>
            <person name="Rad R."/>
            <person name="Beausoleil S.A."/>
            <person name="Villen J."/>
            <person name="Haas W."/>
            <person name="Sowa M.E."/>
            <person name="Gygi S.P."/>
        </authorList>
    </citation>
    <scope>IDENTIFICATION BY MASS SPECTROMETRY [LARGE SCALE ANALYSIS]</scope>
    <source>
        <tissue>Spleen</tissue>
    </source>
</reference>
<sequence>MKLNKRSVAHYALSDSPADHTGFLRSWGGPGSPPTPSGTGRRYWFVLKGNLLFSFETRESRVPLSLVVLEGCTVELAEAPVPEEFAFAIRFDAPGVRPHLLAADGQAAQEAWVKALSRASFGYMRLVVRELESQLQDARQSLALHRCASQRAVASCSKSQAPDHRAPDPENGHFLPRDRSSIGTVEERGIRPIGRDLTEWELQGPASLLLSMGQSPVSPESSCFSTLHDWYGKEIMELRRGWQQRAKGSQTENKSQNRP</sequence>